<sequence>MIIDKLYENVEKKGCVCVGLDTDISYLPKGFLNKFTNIEDAIFAFNQRIVDSTFDVSACYKVQIAYYEAMGIKGMILYKKTLEYIRKKGGIVIADIKRGDISATAKMYAKAHFEGDFESDFITLNPYMGMDTLEPYKDYFKNKEKGVFLLLRTSNEGSKDIQYLDLKDNKKVYNKVGEKIENIGKEFLGNCGYSSIGAVVGCTAEENNIRKELKHTFFLIPGYGAQGGKAEVAKSYLSEGNGGIVNSSRGILLAYKKYDEEGKNFEECARNEVINMKKTLQII</sequence>
<reference key="1">
    <citation type="submission" date="2007-06" db="EMBL/GenBank/DDBJ databases">
        <authorList>
            <person name="Brinkac L.M."/>
            <person name="Daugherty S."/>
            <person name="Dodson R.J."/>
            <person name="Madupu R."/>
            <person name="Brown J.L."/>
            <person name="Bruce D."/>
            <person name="Detter C."/>
            <person name="Munk C."/>
            <person name="Smith L.A."/>
            <person name="Smith T.J."/>
            <person name="White O."/>
            <person name="Brettin T.S."/>
        </authorList>
    </citation>
    <scope>NUCLEOTIDE SEQUENCE [LARGE SCALE GENOMIC DNA]</scope>
    <source>
        <strain>Langeland / NCTC 10281 / Type F</strain>
    </source>
</reference>
<organism>
    <name type="scientific">Clostridium botulinum (strain Langeland / NCTC 10281 / Type F)</name>
    <dbReference type="NCBI Taxonomy" id="441772"/>
    <lineage>
        <taxon>Bacteria</taxon>
        <taxon>Bacillati</taxon>
        <taxon>Bacillota</taxon>
        <taxon>Clostridia</taxon>
        <taxon>Eubacteriales</taxon>
        <taxon>Clostridiaceae</taxon>
        <taxon>Clostridium</taxon>
    </lineage>
</organism>
<name>PYRF_CLOBL</name>
<accession>A7GIH9</accession>
<dbReference type="EC" id="4.1.1.23" evidence="1"/>
<dbReference type="EMBL" id="CP000728">
    <property type="protein sequence ID" value="ABS39472.1"/>
    <property type="molecule type" value="Genomic_DNA"/>
</dbReference>
<dbReference type="RefSeq" id="WP_003405887.1">
    <property type="nucleotide sequence ID" value="NC_009699.1"/>
</dbReference>
<dbReference type="SMR" id="A7GIH9"/>
<dbReference type="KEGG" id="cbf:CLI_3377"/>
<dbReference type="HOGENOM" id="CLU_060704_1_1_9"/>
<dbReference type="UniPathway" id="UPA00070">
    <property type="reaction ID" value="UER00120"/>
</dbReference>
<dbReference type="Proteomes" id="UP000002410">
    <property type="component" value="Chromosome"/>
</dbReference>
<dbReference type="GO" id="GO:0004590">
    <property type="term" value="F:orotidine-5'-phosphate decarboxylase activity"/>
    <property type="evidence" value="ECO:0007669"/>
    <property type="project" value="UniProtKB-UniRule"/>
</dbReference>
<dbReference type="GO" id="GO:0006207">
    <property type="term" value="P:'de novo' pyrimidine nucleobase biosynthetic process"/>
    <property type="evidence" value="ECO:0007669"/>
    <property type="project" value="InterPro"/>
</dbReference>
<dbReference type="GO" id="GO:0044205">
    <property type="term" value="P:'de novo' UMP biosynthetic process"/>
    <property type="evidence" value="ECO:0007669"/>
    <property type="project" value="UniProtKB-UniRule"/>
</dbReference>
<dbReference type="CDD" id="cd04725">
    <property type="entry name" value="OMP_decarboxylase_like"/>
    <property type="match status" value="1"/>
</dbReference>
<dbReference type="FunFam" id="3.20.20.70:FF:000246">
    <property type="entry name" value="Orotidine 5'-phosphate decarboxylase"/>
    <property type="match status" value="1"/>
</dbReference>
<dbReference type="Gene3D" id="3.20.20.70">
    <property type="entry name" value="Aldolase class I"/>
    <property type="match status" value="1"/>
</dbReference>
<dbReference type="HAMAP" id="MF_01215">
    <property type="entry name" value="OMPdecase_type2"/>
    <property type="match status" value="1"/>
</dbReference>
<dbReference type="InterPro" id="IPR013785">
    <property type="entry name" value="Aldolase_TIM"/>
</dbReference>
<dbReference type="InterPro" id="IPR011995">
    <property type="entry name" value="OMPdecase_type-2"/>
</dbReference>
<dbReference type="InterPro" id="IPR001754">
    <property type="entry name" value="OMPdeCOase_dom"/>
</dbReference>
<dbReference type="InterPro" id="IPR011060">
    <property type="entry name" value="RibuloseP-bd_barrel"/>
</dbReference>
<dbReference type="NCBIfam" id="TIGR02127">
    <property type="entry name" value="pyrF_sub2"/>
    <property type="match status" value="1"/>
</dbReference>
<dbReference type="PANTHER" id="PTHR43375">
    <property type="entry name" value="OROTIDINE 5'-PHOSPHATE DECARBOXYLASE"/>
    <property type="match status" value="1"/>
</dbReference>
<dbReference type="PANTHER" id="PTHR43375:SF1">
    <property type="entry name" value="OROTIDINE 5'-PHOSPHATE DECARBOXYLASE"/>
    <property type="match status" value="1"/>
</dbReference>
<dbReference type="Pfam" id="PF00215">
    <property type="entry name" value="OMPdecase"/>
    <property type="match status" value="1"/>
</dbReference>
<dbReference type="SMART" id="SM00934">
    <property type="entry name" value="OMPdecase"/>
    <property type="match status" value="1"/>
</dbReference>
<dbReference type="SUPFAM" id="SSF51366">
    <property type="entry name" value="Ribulose-phoshate binding barrel"/>
    <property type="match status" value="1"/>
</dbReference>
<protein>
    <recommendedName>
        <fullName evidence="1">Orotidine 5'-phosphate decarboxylase</fullName>
        <ecNumber evidence="1">4.1.1.23</ecNumber>
    </recommendedName>
    <alternativeName>
        <fullName evidence="1">OMP decarboxylase</fullName>
        <shortName evidence="1">OMPDCase</shortName>
        <shortName evidence="1">OMPdecase</shortName>
    </alternativeName>
</protein>
<gene>
    <name evidence="1" type="primary">pyrF</name>
    <name type="ordered locus">CLI_3377</name>
</gene>
<evidence type="ECO:0000255" key="1">
    <source>
        <dbReference type="HAMAP-Rule" id="MF_01215"/>
    </source>
</evidence>
<proteinExistence type="inferred from homology"/>
<feature type="chain" id="PRO_1000066463" description="Orotidine 5'-phosphate decarboxylase">
    <location>
        <begin position="1"/>
        <end position="283"/>
    </location>
</feature>
<feature type="active site" description="Proton donor" evidence="1">
    <location>
        <position position="97"/>
    </location>
</feature>
<comment type="catalytic activity">
    <reaction evidence="1">
        <text>orotidine 5'-phosphate + H(+) = UMP + CO2</text>
        <dbReference type="Rhea" id="RHEA:11596"/>
        <dbReference type="ChEBI" id="CHEBI:15378"/>
        <dbReference type="ChEBI" id="CHEBI:16526"/>
        <dbReference type="ChEBI" id="CHEBI:57538"/>
        <dbReference type="ChEBI" id="CHEBI:57865"/>
        <dbReference type="EC" id="4.1.1.23"/>
    </reaction>
</comment>
<comment type="pathway">
    <text evidence="1">Pyrimidine metabolism; UMP biosynthesis via de novo pathway; UMP from orotate: step 2/2.</text>
</comment>
<comment type="similarity">
    <text evidence="1">Belongs to the OMP decarboxylase family. Type 2 subfamily.</text>
</comment>
<keyword id="KW-0210">Decarboxylase</keyword>
<keyword id="KW-0456">Lyase</keyword>
<keyword id="KW-0665">Pyrimidine biosynthesis</keyword>